<name>RNY_DESAP</name>
<comment type="function">
    <text evidence="1">Endoribonuclease that initiates mRNA decay.</text>
</comment>
<comment type="subcellular location">
    <subcellularLocation>
        <location evidence="1">Cell membrane</location>
        <topology evidence="1">Single-pass membrane protein</topology>
    </subcellularLocation>
</comment>
<comment type="similarity">
    <text evidence="1">Belongs to the RNase Y family.</text>
</comment>
<evidence type="ECO:0000255" key="1">
    <source>
        <dbReference type="HAMAP-Rule" id="MF_00335"/>
    </source>
</evidence>
<evidence type="ECO:0000255" key="2">
    <source>
        <dbReference type="PROSITE-ProRule" id="PRU01175"/>
    </source>
</evidence>
<dbReference type="EC" id="3.1.-.-" evidence="1"/>
<dbReference type="EMBL" id="CP000860">
    <property type="protein sequence ID" value="ACA59573.1"/>
    <property type="molecule type" value="Genomic_DNA"/>
</dbReference>
<dbReference type="RefSeq" id="WP_012302159.1">
    <property type="nucleotide sequence ID" value="NC_010424.1"/>
</dbReference>
<dbReference type="SMR" id="B1I3H5"/>
<dbReference type="STRING" id="477974.Daud_1061"/>
<dbReference type="KEGG" id="dau:Daud_1061"/>
<dbReference type="eggNOG" id="COG1418">
    <property type="taxonomic scope" value="Bacteria"/>
</dbReference>
<dbReference type="HOGENOM" id="CLU_028328_1_0_9"/>
<dbReference type="OrthoDB" id="9803205at2"/>
<dbReference type="Proteomes" id="UP000008544">
    <property type="component" value="Chromosome"/>
</dbReference>
<dbReference type="GO" id="GO:0005886">
    <property type="term" value="C:plasma membrane"/>
    <property type="evidence" value="ECO:0007669"/>
    <property type="project" value="UniProtKB-SubCell"/>
</dbReference>
<dbReference type="GO" id="GO:0003723">
    <property type="term" value="F:RNA binding"/>
    <property type="evidence" value="ECO:0007669"/>
    <property type="project" value="UniProtKB-UniRule"/>
</dbReference>
<dbReference type="GO" id="GO:0004521">
    <property type="term" value="F:RNA endonuclease activity"/>
    <property type="evidence" value="ECO:0007669"/>
    <property type="project" value="UniProtKB-UniRule"/>
</dbReference>
<dbReference type="GO" id="GO:0006402">
    <property type="term" value="P:mRNA catabolic process"/>
    <property type="evidence" value="ECO:0007669"/>
    <property type="project" value="UniProtKB-UniRule"/>
</dbReference>
<dbReference type="CDD" id="cd00077">
    <property type="entry name" value="HDc"/>
    <property type="match status" value="1"/>
</dbReference>
<dbReference type="CDD" id="cd22431">
    <property type="entry name" value="KH-I_RNaseY"/>
    <property type="match status" value="1"/>
</dbReference>
<dbReference type="FunFam" id="1.10.3210.10:FF:000022">
    <property type="entry name" value="Ribonuclease Y"/>
    <property type="match status" value="1"/>
</dbReference>
<dbReference type="FunFam" id="3.30.1370.10:FF:000006">
    <property type="entry name" value="Ribonuclease Y"/>
    <property type="match status" value="1"/>
</dbReference>
<dbReference type="Gene3D" id="1.10.3210.10">
    <property type="entry name" value="Hypothetical protein af1432"/>
    <property type="match status" value="1"/>
</dbReference>
<dbReference type="Gene3D" id="3.30.1370.10">
    <property type="entry name" value="K Homology domain, type 1"/>
    <property type="match status" value="1"/>
</dbReference>
<dbReference type="HAMAP" id="MF_00335">
    <property type="entry name" value="RNase_Y"/>
    <property type="match status" value="1"/>
</dbReference>
<dbReference type="InterPro" id="IPR003607">
    <property type="entry name" value="HD/PDEase_dom"/>
</dbReference>
<dbReference type="InterPro" id="IPR006674">
    <property type="entry name" value="HD_domain"/>
</dbReference>
<dbReference type="InterPro" id="IPR006675">
    <property type="entry name" value="HDIG_dom"/>
</dbReference>
<dbReference type="InterPro" id="IPR004087">
    <property type="entry name" value="KH_dom"/>
</dbReference>
<dbReference type="InterPro" id="IPR004088">
    <property type="entry name" value="KH_dom_type_1"/>
</dbReference>
<dbReference type="InterPro" id="IPR036612">
    <property type="entry name" value="KH_dom_type_1_sf"/>
</dbReference>
<dbReference type="InterPro" id="IPR017705">
    <property type="entry name" value="Ribonuclease_Y"/>
</dbReference>
<dbReference type="InterPro" id="IPR022711">
    <property type="entry name" value="RNase_Y_N"/>
</dbReference>
<dbReference type="NCBIfam" id="TIGR00277">
    <property type="entry name" value="HDIG"/>
    <property type="match status" value="1"/>
</dbReference>
<dbReference type="NCBIfam" id="TIGR03319">
    <property type="entry name" value="RNase_Y"/>
    <property type="match status" value="1"/>
</dbReference>
<dbReference type="PANTHER" id="PTHR12826">
    <property type="entry name" value="RIBONUCLEASE Y"/>
    <property type="match status" value="1"/>
</dbReference>
<dbReference type="PANTHER" id="PTHR12826:SF15">
    <property type="entry name" value="RIBONUCLEASE Y"/>
    <property type="match status" value="1"/>
</dbReference>
<dbReference type="Pfam" id="PF01966">
    <property type="entry name" value="HD"/>
    <property type="match status" value="1"/>
</dbReference>
<dbReference type="Pfam" id="PF00013">
    <property type="entry name" value="KH_1"/>
    <property type="match status" value="1"/>
</dbReference>
<dbReference type="Pfam" id="PF12072">
    <property type="entry name" value="RNase_Y_N"/>
    <property type="match status" value="1"/>
</dbReference>
<dbReference type="SMART" id="SM00471">
    <property type="entry name" value="HDc"/>
    <property type="match status" value="1"/>
</dbReference>
<dbReference type="SMART" id="SM00322">
    <property type="entry name" value="KH"/>
    <property type="match status" value="1"/>
</dbReference>
<dbReference type="SUPFAM" id="SSF54791">
    <property type="entry name" value="Eukaryotic type KH-domain (KH-domain type I)"/>
    <property type="match status" value="1"/>
</dbReference>
<dbReference type="SUPFAM" id="SSF109604">
    <property type="entry name" value="HD-domain/PDEase-like"/>
    <property type="match status" value="1"/>
</dbReference>
<dbReference type="PROSITE" id="PS51831">
    <property type="entry name" value="HD"/>
    <property type="match status" value="1"/>
</dbReference>
<dbReference type="PROSITE" id="PS50084">
    <property type="entry name" value="KH_TYPE_1"/>
    <property type="match status" value="1"/>
</dbReference>
<proteinExistence type="inferred from homology"/>
<protein>
    <recommendedName>
        <fullName evidence="1">Ribonuclease Y</fullName>
        <shortName evidence="1">RNase Y</shortName>
        <ecNumber evidence="1">3.1.-.-</ecNumber>
    </recommendedName>
</protein>
<keyword id="KW-1003">Cell membrane</keyword>
<keyword id="KW-0255">Endonuclease</keyword>
<keyword id="KW-0378">Hydrolase</keyword>
<keyword id="KW-0472">Membrane</keyword>
<keyword id="KW-0540">Nuclease</keyword>
<keyword id="KW-1185">Reference proteome</keyword>
<keyword id="KW-0694">RNA-binding</keyword>
<keyword id="KW-0812">Transmembrane</keyword>
<keyword id="KW-1133">Transmembrane helix</keyword>
<organism>
    <name type="scientific">Desulforudis audaxviator (strain MP104C)</name>
    <dbReference type="NCBI Taxonomy" id="477974"/>
    <lineage>
        <taxon>Bacteria</taxon>
        <taxon>Bacillati</taxon>
        <taxon>Bacillota</taxon>
        <taxon>Clostridia</taxon>
        <taxon>Thermoanaerobacterales</taxon>
        <taxon>Candidatus Desulforudaceae</taxon>
        <taxon>Candidatus Desulforudis</taxon>
    </lineage>
</organism>
<accession>B1I3H5</accession>
<gene>
    <name evidence="1" type="primary">rny</name>
    <name type="ordered locus">Daud_1061</name>
</gene>
<sequence>MLENTAIIIAITTGFVAFIGGYFLRKLLGEMKITSAEERARLVLEEAAKEAESKKREAVVEAKEEILKLRNEVERESRERRSELQRQERRLVQKEESLDRKLEALEKKEENLAKRETELAKMHEELKALHQKELQELERISGLSTEEARQILLQDVEKEIQQEAALLVKEIEGRAKEEADRRARNIISLAIQRCAADHVAESTVAVIPLPNEEMKGRIIGREGRNIRAFETLTGVDLIIDDTPEAVIVSGFDPIRRETARMALEKLISDGRIHPARIEEMVEKARKDMEVQIRDTGEQAAFDANVHGLHPDLIKLLGRLKYRTSYGQNVLKHSVEVAYLAGLMAAELRADEKLARRAGLLHDVGKAVDHEVEGPHVTIGVDLAKKYGESPEVLHAIAAHHGDEEPETVEAVLIQAADAISAARPGARRETLEAYVKRLTKLEDIANSFPGVEKAFAIQAGREIRIMVKPDKVDDLGAVRLVRDIARKIENELEYPGQIKVVIIRETRVVEYAK</sequence>
<feature type="chain" id="PRO_0000344864" description="Ribonuclease Y">
    <location>
        <begin position="1"/>
        <end position="513"/>
    </location>
</feature>
<feature type="transmembrane region" description="Helical" evidence="1">
    <location>
        <begin position="4"/>
        <end position="24"/>
    </location>
</feature>
<feature type="domain" description="KH" evidence="1">
    <location>
        <begin position="203"/>
        <end position="266"/>
    </location>
</feature>
<feature type="domain" description="HD" evidence="2">
    <location>
        <begin position="329"/>
        <end position="422"/>
    </location>
</feature>
<reference key="1">
    <citation type="submission" date="2007-10" db="EMBL/GenBank/DDBJ databases">
        <title>Complete sequence of chromosome of Desulforudis audaxviator MP104C.</title>
        <authorList>
            <person name="Copeland A."/>
            <person name="Lucas S."/>
            <person name="Lapidus A."/>
            <person name="Barry K."/>
            <person name="Glavina del Rio T."/>
            <person name="Dalin E."/>
            <person name="Tice H."/>
            <person name="Bruce D."/>
            <person name="Pitluck S."/>
            <person name="Lowry S.R."/>
            <person name="Larimer F."/>
            <person name="Land M.L."/>
            <person name="Hauser L."/>
            <person name="Kyrpides N."/>
            <person name="Ivanova N.N."/>
            <person name="Richardson P."/>
        </authorList>
    </citation>
    <scope>NUCLEOTIDE SEQUENCE [LARGE SCALE GENOMIC DNA]</scope>
    <source>
        <strain>MP104C</strain>
    </source>
</reference>